<comment type="similarity">
    <text evidence="1">Belongs to the universal ribosomal protein uS2 family.</text>
</comment>
<keyword id="KW-1185">Reference proteome</keyword>
<keyword id="KW-0687">Ribonucleoprotein</keyword>
<keyword id="KW-0689">Ribosomal protein</keyword>
<evidence type="ECO:0000255" key="1">
    <source>
        <dbReference type="HAMAP-Rule" id="MF_00291"/>
    </source>
</evidence>
<evidence type="ECO:0000256" key="2">
    <source>
        <dbReference type="SAM" id="MobiDB-lite"/>
    </source>
</evidence>
<evidence type="ECO:0000305" key="3"/>
<protein>
    <recommendedName>
        <fullName evidence="1">Small ribosomal subunit protein uS2</fullName>
    </recommendedName>
    <alternativeName>
        <fullName evidence="3">30S ribosomal protein S2</fullName>
    </alternativeName>
</protein>
<name>RS2_CORGL</name>
<reference key="1">
    <citation type="journal article" date="2003" name="Appl. Microbiol. Biotechnol.">
        <title>The Corynebacterium glutamicum genome: features and impacts on biotechnological processes.</title>
        <authorList>
            <person name="Ikeda M."/>
            <person name="Nakagawa S."/>
        </authorList>
    </citation>
    <scope>NUCLEOTIDE SEQUENCE [LARGE SCALE GENOMIC DNA]</scope>
    <source>
        <strain>ATCC 13032 / DSM 20300 / JCM 1318 / BCRC 11384 / CCUG 27702 / LMG 3730 / NBRC 12168 / NCIMB 10025 / NRRL B-2784 / 534</strain>
    </source>
</reference>
<reference key="2">
    <citation type="journal article" date="2003" name="J. Biotechnol.">
        <title>The complete Corynebacterium glutamicum ATCC 13032 genome sequence and its impact on the production of L-aspartate-derived amino acids and vitamins.</title>
        <authorList>
            <person name="Kalinowski J."/>
            <person name="Bathe B."/>
            <person name="Bartels D."/>
            <person name="Bischoff N."/>
            <person name="Bott M."/>
            <person name="Burkovski A."/>
            <person name="Dusch N."/>
            <person name="Eggeling L."/>
            <person name="Eikmanns B.J."/>
            <person name="Gaigalat L."/>
            <person name="Goesmann A."/>
            <person name="Hartmann M."/>
            <person name="Huthmacher K."/>
            <person name="Kraemer R."/>
            <person name="Linke B."/>
            <person name="McHardy A.C."/>
            <person name="Meyer F."/>
            <person name="Moeckel B."/>
            <person name="Pfefferle W."/>
            <person name="Puehler A."/>
            <person name="Rey D.A."/>
            <person name="Rueckert C."/>
            <person name="Rupp O."/>
            <person name="Sahm H."/>
            <person name="Wendisch V.F."/>
            <person name="Wiegraebe I."/>
            <person name="Tauch A."/>
        </authorList>
    </citation>
    <scope>NUCLEOTIDE SEQUENCE [LARGE SCALE GENOMIC DNA]</scope>
    <source>
        <strain>ATCC 13032 / DSM 20300 / JCM 1318 / BCRC 11384 / CCUG 27702 / LMG 3730 / NBRC 12168 / NCIMB 10025 / NRRL B-2784 / 534</strain>
    </source>
</reference>
<feature type="chain" id="PRO_0000134161" description="Small ribosomal subunit protein uS2">
    <location>
        <begin position="1"/>
        <end position="272"/>
    </location>
</feature>
<feature type="region of interest" description="Disordered" evidence="2">
    <location>
        <begin position="224"/>
        <end position="272"/>
    </location>
</feature>
<feature type="compositionally biased region" description="Basic and acidic residues" evidence="2">
    <location>
        <begin position="224"/>
        <end position="233"/>
    </location>
</feature>
<feature type="compositionally biased region" description="Acidic residues" evidence="2">
    <location>
        <begin position="256"/>
        <end position="272"/>
    </location>
</feature>
<accession>Q8NP01</accession>
<sequence length="272" mass="30119">MAVVTMRELLDAGVHFGHQTRRWNPKMRRFIFTERNGIYIIDLQQTLTYIDQAFEFVKETVAHGGTVLFVGTKKQAQEAVQVEADRVGMPYVNHRWLGGMLTNFQTVSKRLNRMKELQAMDAAENGYEGRTKREVLMLTRERTKLERVLGGIAEMTRVPSALWIIDTNKEHIAVAEAHKLNIPVVAILDTNCDPDVVDFPVPGNDDAIRSTALLSRVISTAVEEGKKAREERQLAAAKDAAGDAKPEAEEAPAAAEAEEAPAAEAEEAPAAE</sequence>
<organism>
    <name type="scientific">Corynebacterium glutamicum (strain ATCC 13032 / DSM 20300 / JCM 1318 / BCRC 11384 / CCUG 27702 / LMG 3730 / NBRC 12168 / NCIMB 10025 / NRRL B-2784 / 534)</name>
    <dbReference type="NCBI Taxonomy" id="196627"/>
    <lineage>
        <taxon>Bacteria</taxon>
        <taxon>Bacillati</taxon>
        <taxon>Actinomycetota</taxon>
        <taxon>Actinomycetes</taxon>
        <taxon>Mycobacteriales</taxon>
        <taxon>Corynebacteriaceae</taxon>
        <taxon>Corynebacterium</taxon>
    </lineage>
</organism>
<gene>
    <name evidence="1" type="primary">rpsB</name>
    <name type="ordered locus">Cgl2026</name>
    <name type="ordered locus">cg2222</name>
</gene>
<proteinExistence type="inferred from homology"/>
<dbReference type="EMBL" id="BA000036">
    <property type="protein sequence ID" value="BAB99419.1"/>
    <property type="molecule type" value="Genomic_DNA"/>
</dbReference>
<dbReference type="EMBL" id="BX927154">
    <property type="protein sequence ID" value="CAF20366.1"/>
    <property type="molecule type" value="Genomic_DNA"/>
</dbReference>
<dbReference type="RefSeq" id="NP_601231.1">
    <property type="nucleotide sequence ID" value="NC_003450.3"/>
</dbReference>
<dbReference type="RefSeq" id="WP_011014831.1">
    <property type="nucleotide sequence ID" value="NC_006958.1"/>
</dbReference>
<dbReference type="SMR" id="Q8NP01"/>
<dbReference type="STRING" id="196627.cg2222"/>
<dbReference type="GeneID" id="1019982"/>
<dbReference type="KEGG" id="cgb:cg2222"/>
<dbReference type="KEGG" id="cgl:Cgl2026"/>
<dbReference type="PATRIC" id="fig|196627.13.peg.1964"/>
<dbReference type="eggNOG" id="COG0052">
    <property type="taxonomic scope" value="Bacteria"/>
</dbReference>
<dbReference type="HOGENOM" id="CLU_040318_2_2_11"/>
<dbReference type="OrthoDB" id="9808036at2"/>
<dbReference type="BioCyc" id="CORYNE:G18NG-11618-MONOMER"/>
<dbReference type="Proteomes" id="UP000000582">
    <property type="component" value="Chromosome"/>
</dbReference>
<dbReference type="Proteomes" id="UP000001009">
    <property type="component" value="Chromosome"/>
</dbReference>
<dbReference type="GO" id="GO:0022627">
    <property type="term" value="C:cytosolic small ribosomal subunit"/>
    <property type="evidence" value="ECO:0007669"/>
    <property type="project" value="TreeGrafter"/>
</dbReference>
<dbReference type="GO" id="GO:0003735">
    <property type="term" value="F:structural constituent of ribosome"/>
    <property type="evidence" value="ECO:0007669"/>
    <property type="project" value="InterPro"/>
</dbReference>
<dbReference type="GO" id="GO:0006412">
    <property type="term" value="P:translation"/>
    <property type="evidence" value="ECO:0007669"/>
    <property type="project" value="UniProtKB-UniRule"/>
</dbReference>
<dbReference type="CDD" id="cd01425">
    <property type="entry name" value="RPS2"/>
    <property type="match status" value="1"/>
</dbReference>
<dbReference type="FunFam" id="1.10.287.610:FF:000001">
    <property type="entry name" value="30S ribosomal protein S2"/>
    <property type="match status" value="1"/>
</dbReference>
<dbReference type="Gene3D" id="3.40.50.10490">
    <property type="entry name" value="Glucose-6-phosphate isomerase like protein, domain 1"/>
    <property type="match status" value="1"/>
</dbReference>
<dbReference type="Gene3D" id="1.10.287.610">
    <property type="entry name" value="Helix hairpin bin"/>
    <property type="match status" value="1"/>
</dbReference>
<dbReference type="HAMAP" id="MF_00291_B">
    <property type="entry name" value="Ribosomal_uS2_B"/>
    <property type="match status" value="1"/>
</dbReference>
<dbReference type="InterPro" id="IPR001865">
    <property type="entry name" value="Ribosomal_uS2"/>
</dbReference>
<dbReference type="InterPro" id="IPR005706">
    <property type="entry name" value="Ribosomal_uS2_bac/mit/plastid"/>
</dbReference>
<dbReference type="InterPro" id="IPR018130">
    <property type="entry name" value="Ribosomal_uS2_CS"/>
</dbReference>
<dbReference type="InterPro" id="IPR023591">
    <property type="entry name" value="Ribosomal_uS2_flav_dom_sf"/>
</dbReference>
<dbReference type="NCBIfam" id="TIGR01011">
    <property type="entry name" value="rpsB_bact"/>
    <property type="match status" value="1"/>
</dbReference>
<dbReference type="PANTHER" id="PTHR12534">
    <property type="entry name" value="30S RIBOSOMAL PROTEIN S2 PROKARYOTIC AND ORGANELLAR"/>
    <property type="match status" value="1"/>
</dbReference>
<dbReference type="PANTHER" id="PTHR12534:SF0">
    <property type="entry name" value="SMALL RIBOSOMAL SUBUNIT PROTEIN US2M"/>
    <property type="match status" value="1"/>
</dbReference>
<dbReference type="Pfam" id="PF00318">
    <property type="entry name" value="Ribosomal_S2"/>
    <property type="match status" value="1"/>
</dbReference>
<dbReference type="PRINTS" id="PR00395">
    <property type="entry name" value="RIBOSOMALS2"/>
</dbReference>
<dbReference type="SUPFAM" id="SSF52313">
    <property type="entry name" value="Ribosomal protein S2"/>
    <property type="match status" value="1"/>
</dbReference>
<dbReference type="PROSITE" id="PS00962">
    <property type="entry name" value="RIBOSOMAL_S2_1"/>
    <property type="match status" value="1"/>
</dbReference>